<comment type="function">
    <text evidence="1">Involved in sequestration of excess metal in the cytoplasm into vacuoles to maintain metal homeostasis.</text>
</comment>
<comment type="subcellular location">
    <subcellularLocation>
        <location evidence="1">Vacuole membrane</location>
        <topology evidence="1">Multi-pass membrane protein</topology>
    </subcellularLocation>
    <text>Tonoplast.</text>
</comment>
<comment type="similarity">
    <text evidence="3">Belongs to the cation diffusion facilitator (CDF) transporter (TC 2.A.4) family. SLC30A subfamily.</text>
</comment>
<sequence>MAAAVAGGGEEGEELLLLSAVEAGSFGGGGDGGGAGAAAEKSWRLNFDGFRPPEVQQERRPPRGLHHHCLGVLSQGPEDVVAEYYQQQVEMLEGFNEMDTLTDRGFLPGMSKEEREKVARSETLAIRLSNIANMVLFAAKVYASVRSGSLAIIASTLDSLLDLLSGFILWFTAFSMQTPNPYRYPIGKKRMQPLGILVFASVMATLGLQIILESVRSLLSDGDEFSLTKEQEKWVVDIMLAVTLVKLALVLYCRTFTNEIVKAYAQDHFFDVITNMIGLVAALLATYIEGWIDPVGAIILAIYTIRTWSMTVLENVHSLVGQSASPEYLQKLTYLCWNHHKAVRHIDTVRAYTFGSHYFVEVDIVLPSSMPLQEAHDIGEALQEKLERLPEIERAFVHLDYEFTHRPEHALSHEK</sequence>
<accession>Q5NA18</accession>
<accession>A0A0P0VA15</accession>
<proteinExistence type="evidence at transcript level"/>
<protein>
    <recommendedName>
        <fullName>Metal tolerance protein 5</fullName>
        <shortName>OsMTP5</shortName>
    </recommendedName>
</protein>
<name>MTP5_ORYSJ</name>
<reference key="1">
    <citation type="journal article" date="2002" name="Nature">
        <title>The genome sequence and structure of rice chromosome 1.</title>
        <authorList>
            <person name="Sasaki T."/>
            <person name="Matsumoto T."/>
            <person name="Yamamoto K."/>
            <person name="Sakata K."/>
            <person name="Baba T."/>
            <person name="Katayose Y."/>
            <person name="Wu J."/>
            <person name="Niimura Y."/>
            <person name="Cheng Z."/>
            <person name="Nagamura Y."/>
            <person name="Antonio B.A."/>
            <person name="Kanamori H."/>
            <person name="Hosokawa S."/>
            <person name="Masukawa M."/>
            <person name="Arikawa K."/>
            <person name="Chiden Y."/>
            <person name="Hayashi M."/>
            <person name="Okamoto M."/>
            <person name="Ando T."/>
            <person name="Aoki H."/>
            <person name="Arita K."/>
            <person name="Hamada M."/>
            <person name="Harada C."/>
            <person name="Hijishita S."/>
            <person name="Honda M."/>
            <person name="Ichikawa Y."/>
            <person name="Idonuma A."/>
            <person name="Iijima M."/>
            <person name="Ikeda M."/>
            <person name="Ikeno M."/>
            <person name="Ito S."/>
            <person name="Ito T."/>
            <person name="Ito Y."/>
            <person name="Ito Y."/>
            <person name="Iwabuchi A."/>
            <person name="Kamiya K."/>
            <person name="Karasawa W."/>
            <person name="Katagiri S."/>
            <person name="Kikuta A."/>
            <person name="Kobayashi N."/>
            <person name="Kono I."/>
            <person name="Machita K."/>
            <person name="Maehara T."/>
            <person name="Mizuno H."/>
            <person name="Mizubayashi T."/>
            <person name="Mukai Y."/>
            <person name="Nagasaki H."/>
            <person name="Nakashima M."/>
            <person name="Nakama Y."/>
            <person name="Nakamichi Y."/>
            <person name="Nakamura M."/>
            <person name="Namiki N."/>
            <person name="Negishi M."/>
            <person name="Ohta I."/>
            <person name="Ono N."/>
            <person name="Saji S."/>
            <person name="Sakai K."/>
            <person name="Shibata M."/>
            <person name="Shimokawa T."/>
            <person name="Shomura A."/>
            <person name="Song J."/>
            <person name="Takazaki Y."/>
            <person name="Terasawa K."/>
            <person name="Tsuji K."/>
            <person name="Waki K."/>
            <person name="Yamagata H."/>
            <person name="Yamane H."/>
            <person name="Yoshiki S."/>
            <person name="Yoshihara R."/>
            <person name="Yukawa K."/>
            <person name="Zhong H."/>
            <person name="Iwama H."/>
            <person name="Endo T."/>
            <person name="Ito H."/>
            <person name="Hahn J.H."/>
            <person name="Kim H.-I."/>
            <person name="Eun M.-Y."/>
            <person name="Yano M."/>
            <person name="Jiang J."/>
            <person name="Gojobori T."/>
        </authorList>
    </citation>
    <scope>NUCLEOTIDE SEQUENCE [LARGE SCALE GENOMIC DNA]</scope>
    <source>
        <strain>cv. Nipponbare</strain>
    </source>
</reference>
<reference key="2">
    <citation type="journal article" date="2005" name="Nature">
        <title>The map-based sequence of the rice genome.</title>
        <authorList>
            <consortium name="International rice genome sequencing project (IRGSP)"/>
        </authorList>
    </citation>
    <scope>NUCLEOTIDE SEQUENCE [LARGE SCALE GENOMIC DNA]</scope>
    <source>
        <strain>cv. Nipponbare</strain>
    </source>
</reference>
<reference key="3">
    <citation type="journal article" date="2008" name="Nucleic Acids Res.">
        <title>The rice annotation project database (RAP-DB): 2008 update.</title>
        <authorList>
            <consortium name="The rice annotation project (RAP)"/>
        </authorList>
    </citation>
    <scope>GENOME REANNOTATION</scope>
    <source>
        <strain>cv. Nipponbare</strain>
    </source>
</reference>
<reference key="4">
    <citation type="journal article" date="2013" name="Rice">
        <title>Improvement of the Oryza sativa Nipponbare reference genome using next generation sequence and optical map data.</title>
        <authorList>
            <person name="Kawahara Y."/>
            <person name="de la Bastide M."/>
            <person name="Hamilton J.P."/>
            <person name="Kanamori H."/>
            <person name="McCombie W.R."/>
            <person name="Ouyang S."/>
            <person name="Schwartz D.C."/>
            <person name="Tanaka T."/>
            <person name="Wu J."/>
            <person name="Zhou S."/>
            <person name="Childs K.L."/>
            <person name="Davidson R.M."/>
            <person name="Lin H."/>
            <person name="Quesada-Ocampo L."/>
            <person name="Vaillancourt B."/>
            <person name="Sakai H."/>
            <person name="Lee S.S."/>
            <person name="Kim J."/>
            <person name="Numa H."/>
            <person name="Itoh T."/>
            <person name="Buell C.R."/>
            <person name="Matsumoto T."/>
        </authorList>
    </citation>
    <scope>GENOME REANNOTATION</scope>
    <source>
        <strain>cv. Nipponbare</strain>
    </source>
</reference>
<reference key="5">
    <citation type="journal article" date="2005" name="PLoS Biol.">
        <title>The genomes of Oryza sativa: a history of duplications.</title>
        <authorList>
            <person name="Yu J."/>
            <person name="Wang J."/>
            <person name="Lin W."/>
            <person name="Li S."/>
            <person name="Li H."/>
            <person name="Zhou J."/>
            <person name="Ni P."/>
            <person name="Dong W."/>
            <person name="Hu S."/>
            <person name="Zeng C."/>
            <person name="Zhang J."/>
            <person name="Zhang Y."/>
            <person name="Li R."/>
            <person name="Xu Z."/>
            <person name="Li S."/>
            <person name="Li X."/>
            <person name="Zheng H."/>
            <person name="Cong L."/>
            <person name="Lin L."/>
            <person name="Yin J."/>
            <person name="Geng J."/>
            <person name="Li G."/>
            <person name="Shi J."/>
            <person name="Liu J."/>
            <person name="Lv H."/>
            <person name="Li J."/>
            <person name="Wang J."/>
            <person name="Deng Y."/>
            <person name="Ran L."/>
            <person name="Shi X."/>
            <person name="Wang X."/>
            <person name="Wu Q."/>
            <person name="Li C."/>
            <person name="Ren X."/>
            <person name="Wang J."/>
            <person name="Wang X."/>
            <person name="Li D."/>
            <person name="Liu D."/>
            <person name="Zhang X."/>
            <person name="Ji Z."/>
            <person name="Zhao W."/>
            <person name="Sun Y."/>
            <person name="Zhang Z."/>
            <person name="Bao J."/>
            <person name="Han Y."/>
            <person name="Dong L."/>
            <person name="Ji J."/>
            <person name="Chen P."/>
            <person name="Wu S."/>
            <person name="Liu J."/>
            <person name="Xiao Y."/>
            <person name="Bu D."/>
            <person name="Tan J."/>
            <person name="Yang L."/>
            <person name="Ye C."/>
            <person name="Zhang J."/>
            <person name="Xu J."/>
            <person name="Zhou Y."/>
            <person name="Yu Y."/>
            <person name="Zhang B."/>
            <person name="Zhuang S."/>
            <person name="Wei H."/>
            <person name="Liu B."/>
            <person name="Lei M."/>
            <person name="Yu H."/>
            <person name="Li Y."/>
            <person name="Xu H."/>
            <person name="Wei S."/>
            <person name="He X."/>
            <person name="Fang L."/>
            <person name="Zhang Z."/>
            <person name="Zhang Y."/>
            <person name="Huang X."/>
            <person name="Su Z."/>
            <person name="Tong W."/>
            <person name="Li J."/>
            <person name="Tong Z."/>
            <person name="Li S."/>
            <person name="Ye J."/>
            <person name="Wang L."/>
            <person name="Fang L."/>
            <person name="Lei T."/>
            <person name="Chen C.-S."/>
            <person name="Chen H.-C."/>
            <person name="Xu Z."/>
            <person name="Li H."/>
            <person name="Huang H."/>
            <person name="Zhang F."/>
            <person name="Xu H."/>
            <person name="Li N."/>
            <person name="Zhao C."/>
            <person name="Li S."/>
            <person name="Dong L."/>
            <person name="Huang Y."/>
            <person name="Li L."/>
            <person name="Xi Y."/>
            <person name="Qi Q."/>
            <person name="Li W."/>
            <person name="Zhang B."/>
            <person name="Hu W."/>
            <person name="Zhang Y."/>
            <person name="Tian X."/>
            <person name="Jiao Y."/>
            <person name="Liang X."/>
            <person name="Jin J."/>
            <person name="Gao L."/>
            <person name="Zheng W."/>
            <person name="Hao B."/>
            <person name="Liu S.-M."/>
            <person name="Wang W."/>
            <person name="Yuan L."/>
            <person name="Cao M."/>
            <person name="McDermott J."/>
            <person name="Samudrala R."/>
            <person name="Wang J."/>
            <person name="Wong G.K.-S."/>
            <person name="Yang H."/>
        </authorList>
    </citation>
    <scope>NUCLEOTIDE SEQUENCE [LARGE SCALE GENOMIC DNA]</scope>
    <source>
        <strain>cv. Nipponbare</strain>
    </source>
</reference>
<reference key="6">
    <citation type="journal article" date="2003" name="Science">
        <title>Collection, mapping, and annotation of over 28,000 cDNA clones from japonica rice.</title>
        <authorList>
            <consortium name="The rice full-length cDNA consortium"/>
        </authorList>
    </citation>
    <scope>NUCLEOTIDE SEQUENCE [LARGE SCALE MRNA]</scope>
    <source>
        <strain>cv. Nipponbare</strain>
    </source>
</reference>
<dbReference type="EMBL" id="AP003231">
    <property type="protein sequence ID" value="BAD81688.1"/>
    <property type="molecule type" value="Genomic_DNA"/>
</dbReference>
<dbReference type="EMBL" id="AP008207">
    <property type="protein sequence ID" value="BAF06655.1"/>
    <property type="molecule type" value="Genomic_DNA"/>
</dbReference>
<dbReference type="EMBL" id="AP014957">
    <property type="protein sequence ID" value="BAS75125.1"/>
    <property type="molecule type" value="Genomic_DNA"/>
</dbReference>
<dbReference type="EMBL" id="CM000138">
    <property type="protein sequence ID" value="EAZ14084.1"/>
    <property type="molecule type" value="Genomic_DNA"/>
</dbReference>
<dbReference type="EMBL" id="AK064840">
    <property type="status" value="NOT_ANNOTATED_CDS"/>
    <property type="molecule type" value="mRNA"/>
</dbReference>
<dbReference type="RefSeq" id="XP_015612688.1">
    <property type="nucleotide sequence ID" value="XM_015757202.1"/>
</dbReference>
<dbReference type="SMR" id="Q5NA18"/>
<dbReference type="FunCoup" id="Q5NA18">
    <property type="interactions" value="107"/>
</dbReference>
<dbReference type="STRING" id="39947.Q5NA18"/>
<dbReference type="PaxDb" id="39947-Q5NA18"/>
<dbReference type="EnsemblPlants" id="Os01t0837800-01">
    <property type="protein sequence ID" value="Os01t0837800-01"/>
    <property type="gene ID" value="Os01g0837800"/>
</dbReference>
<dbReference type="Gramene" id="Os01t0837800-01">
    <property type="protein sequence ID" value="Os01t0837800-01"/>
    <property type="gene ID" value="Os01g0837800"/>
</dbReference>
<dbReference type="KEGG" id="dosa:Os01g0837800"/>
<dbReference type="eggNOG" id="KOG1485">
    <property type="taxonomic scope" value="Eukaryota"/>
</dbReference>
<dbReference type="InParanoid" id="Q5NA18"/>
<dbReference type="OMA" id="CWALRNQ"/>
<dbReference type="OrthoDB" id="78296at2759"/>
<dbReference type="Proteomes" id="UP000000763">
    <property type="component" value="Chromosome 1"/>
</dbReference>
<dbReference type="Proteomes" id="UP000007752">
    <property type="component" value="Chromosome 1"/>
</dbReference>
<dbReference type="Proteomes" id="UP000059680">
    <property type="component" value="Chromosome 1"/>
</dbReference>
<dbReference type="ExpressionAtlas" id="Q5NA18">
    <property type="expression patterns" value="baseline and differential"/>
</dbReference>
<dbReference type="GO" id="GO:0016020">
    <property type="term" value="C:membrane"/>
    <property type="evidence" value="ECO:0000318"/>
    <property type="project" value="GO_Central"/>
</dbReference>
<dbReference type="GO" id="GO:0005774">
    <property type="term" value="C:vacuolar membrane"/>
    <property type="evidence" value="ECO:0007669"/>
    <property type="project" value="UniProtKB-SubCell"/>
</dbReference>
<dbReference type="GO" id="GO:0010486">
    <property type="term" value="F:manganese:proton antiporter activity"/>
    <property type="evidence" value="ECO:0000318"/>
    <property type="project" value="GO_Central"/>
</dbReference>
<dbReference type="FunFam" id="1.20.1510.10:FF:000003">
    <property type="entry name" value="Metal tolerance protein 11"/>
    <property type="match status" value="1"/>
</dbReference>
<dbReference type="FunFam" id="3.30.70.1350:FF:000001">
    <property type="entry name" value="Metal tolerance protein 11"/>
    <property type="match status" value="1"/>
</dbReference>
<dbReference type="Gene3D" id="1.20.1510.10">
    <property type="entry name" value="Cation efflux protein transmembrane domain"/>
    <property type="match status" value="1"/>
</dbReference>
<dbReference type="Gene3D" id="3.30.70.1350">
    <property type="entry name" value="Cation efflux protein, cytoplasmic domain"/>
    <property type="match status" value="1"/>
</dbReference>
<dbReference type="InterPro" id="IPR002524">
    <property type="entry name" value="Cation_efflux"/>
</dbReference>
<dbReference type="InterPro" id="IPR027470">
    <property type="entry name" value="Cation_efflux_CTD"/>
</dbReference>
<dbReference type="InterPro" id="IPR036837">
    <property type="entry name" value="Cation_efflux_CTD_sf"/>
</dbReference>
<dbReference type="InterPro" id="IPR027469">
    <property type="entry name" value="Cation_efflux_TMD_sf"/>
</dbReference>
<dbReference type="InterPro" id="IPR050291">
    <property type="entry name" value="CDF_Transporter"/>
</dbReference>
<dbReference type="NCBIfam" id="TIGR01297">
    <property type="entry name" value="CDF"/>
    <property type="match status" value="1"/>
</dbReference>
<dbReference type="PANTHER" id="PTHR43840:SF5">
    <property type="entry name" value="METAL TOLERANCE PROTEIN 11"/>
    <property type="match status" value="1"/>
</dbReference>
<dbReference type="PANTHER" id="PTHR43840">
    <property type="entry name" value="MITOCHONDRIAL METAL TRANSPORTER 1-RELATED"/>
    <property type="match status" value="1"/>
</dbReference>
<dbReference type="Pfam" id="PF01545">
    <property type="entry name" value="Cation_efflux"/>
    <property type="match status" value="1"/>
</dbReference>
<dbReference type="Pfam" id="PF16916">
    <property type="entry name" value="ZT_dimer"/>
    <property type="match status" value="1"/>
</dbReference>
<dbReference type="SUPFAM" id="SSF160240">
    <property type="entry name" value="Cation efflux protein cytoplasmic domain-like"/>
    <property type="match status" value="1"/>
</dbReference>
<dbReference type="SUPFAM" id="SSF161111">
    <property type="entry name" value="Cation efflux protein transmembrane domain-like"/>
    <property type="match status" value="1"/>
</dbReference>
<keyword id="KW-0406">Ion transport</keyword>
<keyword id="KW-0472">Membrane</keyword>
<keyword id="KW-1185">Reference proteome</keyword>
<keyword id="KW-0812">Transmembrane</keyword>
<keyword id="KW-1133">Transmembrane helix</keyword>
<keyword id="KW-0813">Transport</keyword>
<keyword id="KW-0926">Vacuole</keyword>
<gene>
    <name type="primary">MTP5</name>
    <name type="ordered locus">Os01g0837800</name>
    <name type="ordered locus">LOC_Os01g62070</name>
    <name type="ORF">OsJ_04008</name>
    <name type="ORF">P0031D11.3</name>
</gene>
<evidence type="ECO:0000250" key="1"/>
<evidence type="ECO:0000255" key="2"/>
<evidence type="ECO:0000305" key="3"/>
<organism>
    <name type="scientific">Oryza sativa subsp. japonica</name>
    <name type="common">Rice</name>
    <dbReference type="NCBI Taxonomy" id="39947"/>
    <lineage>
        <taxon>Eukaryota</taxon>
        <taxon>Viridiplantae</taxon>
        <taxon>Streptophyta</taxon>
        <taxon>Embryophyta</taxon>
        <taxon>Tracheophyta</taxon>
        <taxon>Spermatophyta</taxon>
        <taxon>Magnoliopsida</taxon>
        <taxon>Liliopsida</taxon>
        <taxon>Poales</taxon>
        <taxon>Poaceae</taxon>
        <taxon>BOP clade</taxon>
        <taxon>Oryzoideae</taxon>
        <taxon>Oryzeae</taxon>
        <taxon>Oryzinae</taxon>
        <taxon>Oryza</taxon>
        <taxon>Oryza sativa</taxon>
    </lineage>
</organism>
<feature type="chain" id="PRO_0000400013" description="Metal tolerance protein 5">
    <location>
        <begin position="1"/>
        <end position="415"/>
    </location>
</feature>
<feature type="topological domain" description="Cytoplasmic" evidence="2">
    <location>
        <begin position="1"/>
        <end position="124"/>
    </location>
</feature>
<feature type="transmembrane region" description="Helical" evidence="2">
    <location>
        <begin position="125"/>
        <end position="145"/>
    </location>
</feature>
<feature type="topological domain" description="Vacuolar" evidence="2">
    <location>
        <begin position="146"/>
        <end position="150"/>
    </location>
</feature>
<feature type="transmembrane region" description="Helical" evidence="2">
    <location>
        <begin position="151"/>
        <end position="171"/>
    </location>
</feature>
<feature type="topological domain" description="Cytoplasmic" evidence="2">
    <location>
        <begin position="172"/>
        <end position="192"/>
    </location>
</feature>
<feature type="transmembrane region" description="Helical" evidence="2">
    <location>
        <begin position="193"/>
        <end position="213"/>
    </location>
</feature>
<feature type="topological domain" description="Vacuolar" evidence="2">
    <location>
        <begin position="214"/>
        <end position="232"/>
    </location>
</feature>
<feature type="transmembrane region" description="Helical" evidence="2">
    <location>
        <begin position="233"/>
        <end position="253"/>
    </location>
</feature>
<feature type="topological domain" description="Cytoplasmic" evidence="2">
    <location>
        <begin position="254"/>
        <end position="268"/>
    </location>
</feature>
<feature type="transmembrane region" description="Helical" evidence="2">
    <location>
        <begin position="269"/>
        <end position="291"/>
    </location>
</feature>
<feature type="topological domain" description="Vacuolar" evidence="2">
    <location>
        <begin position="292"/>
        <end position="293"/>
    </location>
</feature>
<feature type="transmembrane region" description="Helical" evidence="2">
    <location>
        <begin position="294"/>
        <end position="313"/>
    </location>
</feature>
<feature type="topological domain" description="Cytoplasmic" evidence="2">
    <location>
        <begin position="314"/>
        <end position="415"/>
    </location>
</feature>
<feature type="sequence conflict" description="In Ref. 6; AK064840." evidence="3" ref="6">
    <original>H</original>
    <variation>N</variation>
    <location>
        <position position="67"/>
    </location>
</feature>